<keyword id="KW-0067">ATP-binding</keyword>
<keyword id="KW-0129">CBS domain</keyword>
<keyword id="KW-0413">Isomerase</keyword>
<keyword id="KW-0448">Lipopolysaccharide biosynthesis</keyword>
<keyword id="KW-0479">Metal-binding</keyword>
<keyword id="KW-0547">Nucleotide-binding</keyword>
<keyword id="KW-0677">Repeat</keyword>
<keyword id="KW-0862">Zinc</keyword>
<gene>
    <name type="primary">gutQ</name>
    <name type="ordered locus">STY2960</name>
    <name type="ordered locus">t2740</name>
</gene>
<dbReference type="EC" id="5.3.1.13"/>
<dbReference type="EMBL" id="AE014613">
    <property type="protein sequence ID" value="AAO70301.1"/>
    <property type="molecule type" value="Genomic_DNA"/>
</dbReference>
<dbReference type="EMBL" id="AL513382">
    <property type="protein sequence ID" value="CAD05945.1"/>
    <property type="molecule type" value="Genomic_DNA"/>
</dbReference>
<dbReference type="RefSeq" id="NP_457232.1">
    <property type="nucleotide sequence ID" value="NC_003198.1"/>
</dbReference>
<dbReference type="RefSeq" id="WP_001278206.1">
    <property type="nucleotide sequence ID" value="NZ_WSUR01000005.1"/>
</dbReference>
<dbReference type="SMR" id="Q8Z4C7"/>
<dbReference type="STRING" id="220341.gene:17586855"/>
<dbReference type="KEGG" id="stt:t2740"/>
<dbReference type="KEGG" id="sty:STY2960"/>
<dbReference type="PATRIC" id="fig|220341.7.peg.3014"/>
<dbReference type="eggNOG" id="COG0517">
    <property type="taxonomic scope" value="Bacteria"/>
</dbReference>
<dbReference type="eggNOG" id="COG0794">
    <property type="taxonomic scope" value="Bacteria"/>
</dbReference>
<dbReference type="HOGENOM" id="CLU_040681_13_1_6"/>
<dbReference type="OMA" id="KDQYAAN"/>
<dbReference type="OrthoDB" id="9762536at2"/>
<dbReference type="Proteomes" id="UP000000541">
    <property type="component" value="Chromosome"/>
</dbReference>
<dbReference type="Proteomes" id="UP000002670">
    <property type="component" value="Chromosome"/>
</dbReference>
<dbReference type="GO" id="GO:0019146">
    <property type="term" value="F:arabinose-5-phosphate isomerase activity"/>
    <property type="evidence" value="ECO:0007669"/>
    <property type="project" value="UniProtKB-EC"/>
</dbReference>
<dbReference type="GO" id="GO:0005524">
    <property type="term" value="F:ATP binding"/>
    <property type="evidence" value="ECO:0007669"/>
    <property type="project" value="UniProtKB-KW"/>
</dbReference>
<dbReference type="GO" id="GO:0046872">
    <property type="term" value="F:metal ion binding"/>
    <property type="evidence" value="ECO:0007669"/>
    <property type="project" value="UniProtKB-KW"/>
</dbReference>
<dbReference type="GO" id="GO:0019294">
    <property type="term" value="P:keto-3-deoxy-D-manno-octulosonic acid biosynthetic process"/>
    <property type="evidence" value="ECO:0000250"/>
    <property type="project" value="UniProtKB"/>
</dbReference>
<dbReference type="CDD" id="cd04604">
    <property type="entry name" value="CBS_pair_SIS_assoc"/>
    <property type="match status" value="1"/>
</dbReference>
<dbReference type="CDD" id="cd05014">
    <property type="entry name" value="SIS_Kpsf"/>
    <property type="match status" value="1"/>
</dbReference>
<dbReference type="FunFam" id="3.10.580.10:FF:000013">
    <property type="entry name" value="Arabinose 5-phosphate isomerase"/>
    <property type="match status" value="1"/>
</dbReference>
<dbReference type="FunFam" id="3.40.50.10490:FF:000011">
    <property type="entry name" value="Arabinose 5-phosphate isomerase"/>
    <property type="match status" value="1"/>
</dbReference>
<dbReference type="Gene3D" id="3.10.580.10">
    <property type="entry name" value="CBS-domain"/>
    <property type="match status" value="1"/>
</dbReference>
<dbReference type="Gene3D" id="3.40.50.10490">
    <property type="entry name" value="Glucose-6-phosphate isomerase like protein, domain 1"/>
    <property type="match status" value="1"/>
</dbReference>
<dbReference type="InterPro" id="IPR000644">
    <property type="entry name" value="CBS_dom"/>
</dbReference>
<dbReference type="InterPro" id="IPR046342">
    <property type="entry name" value="CBS_dom_sf"/>
</dbReference>
<dbReference type="InterPro" id="IPR050986">
    <property type="entry name" value="GutQ/KpsF_isomerases"/>
</dbReference>
<dbReference type="InterPro" id="IPR004800">
    <property type="entry name" value="KdsD/KpsF-type"/>
</dbReference>
<dbReference type="InterPro" id="IPR001347">
    <property type="entry name" value="SIS_dom"/>
</dbReference>
<dbReference type="InterPro" id="IPR046348">
    <property type="entry name" value="SIS_dom_sf"/>
</dbReference>
<dbReference type="InterPro" id="IPR035474">
    <property type="entry name" value="SIS_Kpsf"/>
</dbReference>
<dbReference type="NCBIfam" id="TIGR00393">
    <property type="entry name" value="kpsF"/>
    <property type="match status" value="1"/>
</dbReference>
<dbReference type="NCBIfam" id="NF008581">
    <property type="entry name" value="PRK11543.1"/>
    <property type="match status" value="1"/>
</dbReference>
<dbReference type="PANTHER" id="PTHR42745">
    <property type="match status" value="1"/>
</dbReference>
<dbReference type="PANTHER" id="PTHR42745:SF2">
    <property type="entry name" value="ARABINOSE 5-PHOSPHATE ISOMERASE GUTQ"/>
    <property type="match status" value="1"/>
</dbReference>
<dbReference type="Pfam" id="PF00571">
    <property type="entry name" value="CBS"/>
    <property type="match status" value="2"/>
</dbReference>
<dbReference type="Pfam" id="PF01380">
    <property type="entry name" value="SIS"/>
    <property type="match status" value="1"/>
</dbReference>
<dbReference type="PIRSF" id="PIRSF004692">
    <property type="entry name" value="KdsD_KpsF"/>
    <property type="match status" value="1"/>
</dbReference>
<dbReference type="SUPFAM" id="SSF54631">
    <property type="entry name" value="CBS-domain pair"/>
    <property type="match status" value="1"/>
</dbReference>
<dbReference type="SUPFAM" id="SSF53697">
    <property type="entry name" value="SIS domain"/>
    <property type="match status" value="1"/>
</dbReference>
<dbReference type="PROSITE" id="PS51371">
    <property type="entry name" value="CBS"/>
    <property type="match status" value="2"/>
</dbReference>
<dbReference type="PROSITE" id="PS51464">
    <property type="entry name" value="SIS"/>
    <property type="match status" value="1"/>
</dbReference>
<organism>
    <name type="scientific">Salmonella typhi</name>
    <dbReference type="NCBI Taxonomy" id="90370"/>
    <lineage>
        <taxon>Bacteria</taxon>
        <taxon>Pseudomonadati</taxon>
        <taxon>Pseudomonadota</taxon>
        <taxon>Gammaproteobacteria</taxon>
        <taxon>Enterobacterales</taxon>
        <taxon>Enterobacteriaceae</taxon>
        <taxon>Salmonella</taxon>
    </lineage>
</organism>
<feature type="chain" id="PRO_0000410939" description="Arabinose 5-phosphate isomerase GutQ">
    <location>
        <begin position="1"/>
        <end position="321"/>
    </location>
</feature>
<feature type="domain" description="SIS" evidence="4">
    <location>
        <begin position="34"/>
        <end position="177"/>
    </location>
</feature>
<feature type="domain" description="CBS 1" evidence="3">
    <location>
        <begin position="203"/>
        <end position="261"/>
    </location>
</feature>
<feature type="domain" description="CBS 2" evidence="3">
    <location>
        <begin position="269"/>
        <end position="321"/>
    </location>
</feature>
<feature type="binding site" evidence="2">
    <location>
        <begin position="49"/>
        <end position="54"/>
    </location>
    <ligand>
        <name>ATP</name>
        <dbReference type="ChEBI" id="CHEBI:30616"/>
    </ligand>
</feature>
<feature type="binding site" evidence="1">
    <location>
        <begin position="68"/>
        <end position="69"/>
    </location>
    <ligand>
        <name>substrate</name>
    </ligand>
</feature>
<feature type="binding site" evidence="1">
    <location>
        <position position="75"/>
    </location>
    <ligand>
        <name>substrate</name>
    </ligand>
</feature>
<feature type="binding site" evidence="1">
    <location>
        <position position="75"/>
    </location>
    <ligand>
        <name>Zn(2+)</name>
        <dbReference type="ChEBI" id="CHEBI:29105"/>
    </ligand>
</feature>
<feature type="binding site" evidence="1">
    <location>
        <position position="81"/>
    </location>
    <ligand>
        <name>substrate</name>
    </ligand>
</feature>
<feature type="binding site" evidence="1">
    <location>
        <begin position="107"/>
        <end position="116"/>
    </location>
    <ligand>
        <name>substrate</name>
    </ligand>
</feature>
<feature type="binding site" evidence="1">
    <location>
        <begin position="141"/>
        <end position="143"/>
    </location>
    <ligand>
        <name>substrate</name>
    </ligand>
</feature>
<feature type="binding site" evidence="1">
    <location>
        <position position="267"/>
    </location>
    <ligand>
        <name>substrate</name>
    </ligand>
</feature>
<feature type="site" description="Catalytically relevant" evidence="1">
    <location>
        <position position="52"/>
    </location>
</feature>
<feature type="site" description="Catalytically relevant" evidence="1">
    <location>
        <position position="104"/>
    </location>
</feature>
<feature type="site" description="Catalytically relevant" evidence="1">
    <location>
        <position position="145"/>
    </location>
</feature>
<feature type="site" description="Catalytically relevant" evidence="1">
    <location>
        <position position="186"/>
    </location>
</feature>
<evidence type="ECO:0000250" key="1"/>
<evidence type="ECO:0000255" key="2"/>
<evidence type="ECO:0000255" key="3">
    <source>
        <dbReference type="PROSITE-ProRule" id="PRU00703"/>
    </source>
</evidence>
<evidence type="ECO:0000255" key="4">
    <source>
        <dbReference type="PROSITE-ProRule" id="PRU00797"/>
    </source>
</evidence>
<evidence type="ECO:0000305" key="5"/>
<comment type="function">
    <text evidence="1">Catalyzes the reversible aldol-ketol isomerization between D-ribulose 5-phosphate (Ru5P) and D-arabinose 5-phosphate (A5P). It is also able of sustaining the biosynthetic pathway of 3-deoxy-D-manno-octulosonate (KDO), a unique 8-carbon sugar component of lipopolysaccharides (LPSs) (By similarity).</text>
</comment>
<comment type="catalytic activity">
    <reaction>
        <text>D-arabinose 5-phosphate = D-ribulose 5-phosphate</text>
        <dbReference type="Rhea" id="RHEA:23104"/>
        <dbReference type="ChEBI" id="CHEBI:57693"/>
        <dbReference type="ChEBI" id="CHEBI:58121"/>
        <dbReference type="EC" id="5.3.1.13"/>
    </reaction>
</comment>
<comment type="subunit">
    <text evidence="1">Homotetramer.</text>
</comment>
<comment type="similarity">
    <text evidence="5">Belongs to the SIS family. GutQ/KpsF subfamily.</text>
</comment>
<protein>
    <recommendedName>
        <fullName>Arabinose 5-phosphate isomerase GutQ</fullName>
        <shortName>API</shortName>
        <shortName>G-API</shortName>
        <ecNumber>5.3.1.13</ecNumber>
    </recommendedName>
    <alternativeName>
        <fullName>Phosphosugar aldol-ketol isomerase</fullName>
    </alternativeName>
</protein>
<sequence>MSDALLNAGRQTLMLELQEASRLPERLGDDFVRAANIIIHCEGKVIVSGIGKSGHIGKKIAATLASTGTPAFFVHPAEALHGDLGMIESRDVMLFISYSGGAKELDLIIPRLEDKSVALLAMTGKPHSPLGRAAKAVLDISVEREACPMHLAPTSSTVNTLMMGDALAMAVMQARGFNEEDFARSHPAGALGARLLNNVHHLMRQGDAIPQVMLATSVMDAMLELSRTGLGLVAVCDEQHVVKGVFTDGDLRRWLVGGGALTTPVSEAMTPNGITLQAQSRAIDAKELLMKRKITAAPVVDENGKLTGAINLQDFYQAGII</sequence>
<accession>Q8Z4C7</accession>
<accession>Q7C7R3</accession>
<name>GUTQ_SALTI</name>
<reference key="1">
    <citation type="journal article" date="2001" name="Nature">
        <title>Complete genome sequence of a multiple drug resistant Salmonella enterica serovar Typhi CT18.</title>
        <authorList>
            <person name="Parkhill J."/>
            <person name="Dougan G."/>
            <person name="James K.D."/>
            <person name="Thomson N.R."/>
            <person name="Pickard D."/>
            <person name="Wain J."/>
            <person name="Churcher C.M."/>
            <person name="Mungall K.L."/>
            <person name="Bentley S.D."/>
            <person name="Holden M.T.G."/>
            <person name="Sebaihia M."/>
            <person name="Baker S."/>
            <person name="Basham D."/>
            <person name="Brooks K."/>
            <person name="Chillingworth T."/>
            <person name="Connerton P."/>
            <person name="Cronin A."/>
            <person name="Davis P."/>
            <person name="Davies R.M."/>
            <person name="Dowd L."/>
            <person name="White N."/>
            <person name="Farrar J."/>
            <person name="Feltwell T."/>
            <person name="Hamlin N."/>
            <person name="Haque A."/>
            <person name="Hien T.T."/>
            <person name="Holroyd S."/>
            <person name="Jagels K."/>
            <person name="Krogh A."/>
            <person name="Larsen T.S."/>
            <person name="Leather S."/>
            <person name="Moule S."/>
            <person name="O'Gaora P."/>
            <person name="Parry C."/>
            <person name="Quail M.A."/>
            <person name="Rutherford K.M."/>
            <person name="Simmonds M."/>
            <person name="Skelton J."/>
            <person name="Stevens K."/>
            <person name="Whitehead S."/>
            <person name="Barrell B.G."/>
        </authorList>
    </citation>
    <scope>NUCLEOTIDE SEQUENCE [LARGE SCALE GENOMIC DNA]</scope>
    <source>
        <strain>CT18</strain>
    </source>
</reference>
<reference key="2">
    <citation type="journal article" date="2003" name="J. Bacteriol.">
        <title>Comparative genomics of Salmonella enterica serovar Typhi strains Ty2 and CT18.</title>
        <authorList>
            <person name="Deng W."/>
            <person name="Liou S.-R."/>
            <person name="Plunkett G. III"/>
            <person name="Mayhew G.F."/>
            <person name="Rose D.J."/>
            <person name="Burland V."/>
            <person name="Kodoyianni V."/>
            <person name="Schwartz D.C."/>
            <person name="Blattner F.R."/>
        </authorList>
    </citation>
    <scope>NUCLEOTIDE SEQUENCE [LARGE SCALE GENOMIC DNA]</scope>
    <source>
        <strain>ATCC 700931 / Ty2</strain>
    </source>
</reference>
<proteinExistence type="inferred from homology"/>